<evidence type="ECO:0000250" key="1"/>
<evidence type="ECO:0000255" key="2"/>
<evidence type="ECO:0000305" key="3"/>
<gene>
    <name type="ORF">POPTR_0011s05180g</name>
</gene>
<reference key="1">
    <citation type="journal article" date="2006" name="Science">
        <title>The genome of black cottonwood, Populus trichocarpa (Torr. &amp; Gray).</title>
        <authorList>
            <person name="Tuskan G.A."/>
            <person name="Difazio S."/>
            <person name="Jansson S."/>
            <person name="Bohlmann J."/>
            <person name="Grigoriev I."/>
            <person name="Hellsten U."/>
            <person name="Putnam N."/>
            <person name="Ralph S."/>
            <person name="Rombauts S."/>
            <person name="Salamov A."/>
            <person name="Schein J."/>
            <person name="Sterck L."/>
            <person name="Aerts A."/>
            <person name="Bhalerao R.R."/>
            <person name="Bhalerao R.P."/>
            <person name="Blaudez D."/>
            <person name="Boerjan W."/>
            <person name="Brun A."/>
            <person name="Brunner A."/>
            <person name="Busov V."/>
            <person name="Campbell M."/>
            <person name="Carlson J."/>
            <person name="Chalot M."/>
            <person name="Chapman J."/>
            <person name="Chen G.-L."/>
            <person name="Cooper D."/>
            <person name="Coutinho P.M."/>
            <person name="Couturier J."/>
            <person name="Covert S."/>
            <person name="Cronk Q."/>
            <person name="Cunningham R."/>
            <person name="Davis J."/>
            <person name="Degroeve S."/>
            <person name="Dejardin A."/>
            <person name="dePamphilis C.W."/>
            <person name="Detter J."/>
            <person name="Dirks B."/>
            <person name="Dubchak I."/>
            <person name="Duplessis S."/>
            <person name="Ehlting J."/>
            <person name="Ellis B."/>
            <person name="Gendler K."/>
            <person name="Goodstein D."/>
            <person name="Gribskov M."/>
            <person name="Grimwood J."/>
            <person name="Groover A."/>
            <person name="Gunter L."/>
            <person name="Hamberger B."/>
            <person name="Heinze B."/>
            <person name="Helariutta Y."/>
            <person name="Henrissat B."/>
            <person name="Holligan D."/>
            <person name="Holt R."/>
            <person name="Huang W."/>
            <person name="Islam-Faridi N."/>
            <person name="Jones S."/>
            <person name="Jones-Rhoades M."/>
            <person name="Jorgensen R."/>
            <person name="Joshi C."/>
            <person name="Kangasjaervi J."/>
            <person name="Karlsson J."/>
            <person name="Kelleher C."/>
            <person name="Kirkpatrick R."/>
            <person name="Kirst M."/>
            <person name="Kohler A."/>
            <person name="Kalluri U."/>
            <person name="Larimer F."/>
            <person name="Leebens-Mack J."/>
            <person name="Leple J.-C."/>
            <person name="Locascio P."/>
            <person name="Lou Y."/>
            <person name="Lucas S."/>
            <person name="Martin F."/>
            <person name="Montanini B."/>
            <person name="Napoli C."/>
            <person name="Nelson D.R."/>
            <person name="Nelson C."/>
            <person name="Nieminen K."/>
            <person name="Nilsson O."/>
            <person name="Pereda V."/>
            <person name="Peter G."/>
            <person name="Philippe R."/>
            <person name="Pilate G."/>
            <person name="Poliakov A."/>
            <person name="Razumovskaya J."/>
            <person name="Richardson P."/>
            <person name="Rinaldi C."/>
            <person name="Ritland K."/>
            <person name="Rouze P."/>
            <person name="Ryaboy D."/>
            <person name="Schmutz J."/>
            <person name="Schrader J."/>
            <person name="Segerman B."/>
            <person name="Shin H."/>
            <person name="Siddiqui A."/>
            <person name="Sterky F."/>
            <person name="Terry A."/>
            <person name="Tsai C.-J."/>
            <person name="Uberbacher E."/>
            <person name="Unneberg P."/>
            <person name="Vahala J."/>
            <person name="Wall K."/>
            <person name="Wessler S."/>
            <person name="Yang G."/>
            <person name="Yin T."/>
            <person name="Douglas C."/>
            <person name="Marra M."/>
            <person name="Sandberg G."/>
            <person name="Van de Peer Y."/>
            <person name="Rokhsar D.S."/>
        </authorList>
    </citation>
    <scope>NUCLEOTIDE SEQUENCE [LARGE SCALE GENOMIC DNA]</scope>
    <source>
        <strain>cv. Nisqually</strain>
    </source>
</reference>
<reference key="2">
    <citation type="submission" date="2008-12" db="EMBL/GenBank/DDBJ databases">
        <authorList>
            <consortium name="US DOE Joint Genome Institute (JGI-PGF)"/>
            <person name="Grigoriev I.V."/>
            <person name="Terry A."/>
            <person name="Salamov A.A."/>
            <person name="Otillar R."/>
            <person name="Lou Y."/>
            <person name="Lucas S."/>
            <person name="Hammon N."/>
            <person name="Glavina del Rio T."/>
            <person name="Detter J."/>
            <person name="Kalin E."/>
            <person name="Tice H."/>
            <person name="Pitluck S."/>
            <person name="Chapman J."/>
            <person name="Putnam N.H."/>
            <person name="Brunner A."/>
            <person name="Busov V."/>
            <person name="Campbell M."/>
            <person name="Chalot M."/>
            <person name="Covert S."/>
            <person name="Davis J."/>
            <person name="DiFazio S."/>
            <person name="Gribskov M."/>
            <person name="Gunter L."/>
            <person name="Hamberger B."/>
            <person name="Jansson S."/>
            <person name="Joshi C."/>
            <person name="Larimer F."/>
            <person name="Martin F."/>
            <person name="Napoli C."/>
            <person name="Nelson D."/>
            <person name="Ralph S."/>
            <person name="Rombauts S."/>
            <person name="Rouze P."/>
            <person name="Schrader J."/>
            <person name="Tsai C."/>
            <person name="Vahala J."/>
            <person name="Tuskan G."/>
            <person name="Rokhsar D."/>
        </authorList>
    </citation>
    <scope>GENOME REANNOTATION</scope>
    <source>
        <strain>cv. Nisqually</strain>
    </source>
</reference>
<reference key="3">
    <citation type="journal article" date="2014" name="Plant Physiol.">
        <title>Functional and evolutionary analysis of the CASPARIAN STRIP MEMBRANE DOMAIN PROTEIN family.</title>
        <authorList>
            <person name="Roppolo D."/>
            <person name="Boeckmann B."/>
            <person name="Pfister A."/>
            <person name="Boutet E."/>
            <person name="Rubio M.C."/>
            <person name="Denervaud-Tendon V."/>
            <person name="Vermeer J.E."/>
            <person name="Gheyselinck J."/>
            <person name="Xenarios I."/>
            <person name="Geldner N."/>
        </authorList>
    </citation>
    <scope>GENE FAMILY</scope>
    <scope>NOMENCLATURE</scope>
</reference>
<sequence>MAKSNKIFTNTLRLLALAATVVAIVFMVTSHDSAQVLNLTFTAKYSNTPAFKFLVIGEAIAGGYTVISILLSFKGLFWRLIVILDMVTTVLLTSSISAALAIAQVGKKGNTHAGWLPICGQVPDFCDYVTIALIAGFAAAIIYFVLLLCSLYVVLSPIFVATP</sequence>
<comment type="subunit">
    <text evidence="1">Homodimer and heterodimers.</text>
</comment>
<comment type="subcellular location">
    <subcellularLocation>
        <location evidence="1">Cell membrane</location>
        <topology evidence="1">Multi-pass membrane protein</topology>
    </subcellularLocation>
</comment>
<comment type="similarity">
    <text evidence="3">Belongs to the Casparian strip membrane proteins (CASP) family.</text>
</comment>
<dbReference type="EMBL" id="CM009300">
    <property type="protein sequence ID" value="ERP55149.1"/>
    <property type="molecule type" value="Genomic_DNA"/>
</dbReference>
<dbReference type="SMR" id="B9N3F4"/>
<dbReference type="STRING" id="3694.B9N3F4"/>
<dbReference type="EnsemblPlants" id="Potri.011G052100.1.v4.1">
    <property type="protein sequence ID" value="Potri.011G052100.1.v4.1"/>
    <property type="gene ID" value="Potri.011G052100.v4.1"/>
</dbReference>
<dbReference type="Gramene" id="Potri.011G052100.1.v4.1">
    <property type="protein sequence ID" value="Potri.011G052100.1.v4.1"/>
    <property type="gene ID" value="Potri.011G052100.v4.1"/>
</dbReference>
<dbReference type="KEGG" id="pop:18103019"/>
<dbReference type="eggNOG" id="ENOG502RZXX">
    <property type="taxonomic scope" value="Eukaryota"/>
</dbReference>
<dbReference type="HOGENOM" id="CLU_066104_3_0_1"/>
<dbReference type="InParanoid" id="B9N3F4"/>
<dbReference type="OMA" id="CATVIMA"/>
<dbReference type="OrthoDB" id="1906221at2759"/>
<dbReference type="Proteomes" id="UP000006729">
    <property type="component" value="Chromosome 11"/>
</dbReference>
<dbReference type="ExpressionAtlas" id="B9N3F4">
    <property type="expression patterns" value="baseline"/>
</dbReference>
<dbReference type="GO" id="GO:0005886">
    <property type="term" value="C:plasma membrane"/>
    <property type="evidence" value="ECO:0000318"/>
    <property type="project" value="GO_Central"/>
</dbReference>
<dbReference type="InterPro" id="IPR006459">
    <property type="entry name" value="CASP/CASPL"/>
</dbReference>
<dbReference type="InterPro" id="IPR006702">
    <property type="entry name" value="CASP_dom"/>
</dbReference>
<dbReference type="InterPro" id="IPR044173">
    <property type="entry name" value="CASPL"/>
</dbReference>
<dbReference type="NCBIfam" id="TIGR01569">
    <property type="entry name" value="A_tha_TIGR01569"/>
    <property type="match status" value="1"/>
</dbReference>
<dbReference type="PANTHER" id="PTHR36488">
    <property type="entry name" value="CASP-LIKE PROTEIN 1U1"/>
    <property type="match status" value="1"/>
</dbReference>
<dbReference type="PANTHER" id="PTHR36488:SF8">
    <property type="entry name" value="CASP-LIKE PROTEIN 1U1"/>
    <property type="match status" value="1"/>
</dbReference>
<dbReference type="Pfam" id="PF04535">
    <property type="entry name" value="CASP_dom"/>
    <property type="match status" value="1"/>
</dbReference>
<feature type="chain" id="PRO_0000412040" description="CASP-like protein 1C2">
    <location>
        <begin position="1"/>
        <end position="163"/>
    </location>
</feature>
<feature type="topological domain" description="Cytoplasmic" evidence="2">
    <location>
        <begin position="1"/>
        <end position="6"/>
    </location>
</feature>
<feature type="transmembrane region" description="Helical" evidence="2">
    <location>
        <begin position="7"/>
        <end position="27"/>
    </location>
</feature>
<feature type="topological domain" description="Extracellular" evidence="2">
    <location>
        <begin position="28"/>
        <end position="52"/>
    </location>
</feature>
<feature type="transmembrane region" description="Helical" evidence="2">
    <location>
        <begin position="53"/>
        <end position="73"/>
    </location>
</feature>
<feature type="topological domain" description="Cytoplasmic" evidence="2">
    <location>
        <begin position="74"/>
        <end position="79"/>
    </location>
</feature>
<feature type="transmembrane region" description="Helical" evidence="2">
    <location>
        <begin position="80"/>
        <end position="100"/>
    </location>
</feature>
<feature type="topological domain" description="Extracellular" evidence="2">
    <location>
        <begin position="101"/>
        <end position="128"/>
    </location>
</feature>
<feature type="transmembrane region" description="Helical" evidence="2">
    <location>
        <begin position="129"/>
        <end position="149"/>
    </location>
</feature>
<feature type="topological domain" description="Cytoplasmic" evidence="2">
    <location>
        <begin position="150"/>
        <end position="163"/>
    </location>
</feature>
<feature type="glycosylation site" description="N-linked (GlcNAc...) asparagine" evidence="2">
    <location>
        <position position="38"/>
    </location>
</feature>
<accession>B9N3F4</accession>
<accession>U5FYD4</accession>
<name>CSPL9_POPTR</name>
<organism>
    <name type="scientific">Populus trichocarpa</name>
    <name type="common">Western balsam poplar</name>
    <name type="synonym">Populus balsamifera subsp. trichocarpa</name>
    <dbReference type="NCBI Taxonomy" id="3694"/>
    <lineage>
        <taxon>Eukaryota</taxon>
        <taxon>Viridiplantae</taxon>
        <taxon>Streptophyta</taxon>
        <taxon>Embryophyta</taxon>
        <taxon>Tracheophyta</taxon>
        <taxon>Spermatophyta</taxon>
        <taxon>Magnoliopsida</taxon>
        <taxon>eudicotyledons</taxon>
        <taxon>Gunneridae</taxon>
        <taxon>Pentapetalae</taxon>
        <taxon>rosids</taxon>
        <taxon>fabids</taxon>
        <taxon>Malpighiales</taxon>
        <taxon>Salicaceae</taxon>
        <taxon>Saliceae</taxon>
        <taxon>Populus</taxon>
    </lineage>
</organism>
<proteinExistence type="inferred from homology"/>
<keyword id="KW-1003">Cell membrane</keyword>
<keyword id="KW-0325">Glycoprotein</keyword>
<keyword id="KW-0472">Membrane</keyword>
<keyword id="KW-1185">Reference proteome</keyword>
<keyword id="KW-0812">Transmembrane</keyword>
<keyword id="KW-1133">Transmembrane helix</keyword>
<protein>
    <recommendedName>
        <fullName>CASP-like protein 1C2</fullName>
        <shortName>PtCASPL1C2</shortName>
    </recommendedName>
</protein>